<evidence type="ECO:0000250" key="1"/>
<evidence type="ECO:0000305" key="2"/>
<gene>
    <name type="primary">hemB</name>
    <name type="ordered locus">BSU28130</name>
</gene>
<feature type="chain" id="PRO_0000140493" description="Delta-aminolevulinic acid dehydratase">
    <location>
        <begin position="1"/>
        <end position="324"/>
    </location>
</feature>
<feature type="active site" description="Schiff-base intermediate with substrate" evidence="1">
    <location>
        <position position="195"/>
    </location>
</feature>
<feature type="active site" description="Schiff-base intermediate with substrate" evidence="1">
    <location>
        <position position="248"/>
    </location>
</feature>
<feature type="binding site" evidence="1">
    <location>
        <position position="120"/>
    </location>
    <ligand>
        <name>Zn(2+)</name>
        <dbReference type="ChEBI" id="CHEBI:29105"/>
        <note>catalytic</note>
    </ligand>
</feature>
<feature type="binding site" evidence="1">
    <location>
        <position position="122"/>
    </location>
    <ligand>
        <name>Zn(2+)</name>
        <dbReference type="ChEBI" id="CHEBI:29105"/>
        <note>catalytic</note>
    </ligand>
</feature>
<feature type="binding site" evidence="1">
    <location>
        <position position="130"/>
    </location>
    <ligand>
        <name>Zn(2+)</name>
        <dbReference type="ChEBI" id="CHEBI:29105"/>
        <note>catalytic</note>
    </ligand>
</feature>
<feature type="binding site" evidence="1">
    <location>
        <position position="205"/>
    </location>
    <ligand>
        <name>5-aminolevulinate</name>
        <dbReference type="ChEBI" id="CHEBI:356416"/>
        <label>1</label>
    </ligand>
</feature>
<feature type="binding site" evidence="1">
    <location>
        <position position="217"/>
    </location>
    <ligand>
        <name>5-aminolevulinate</name>
        <dbReference type="ChEBI" id="CHEBI:356416"/>
        <label>1</label>
    </ligand>
</feature>
<feature type="binding site" evidence="1">
    <location>
        <position position="233"/>
    </location>
    <ligand>
        <name>Mg(2+)</name>
        <dbReference type="ChEBI" id="CHEBI:18420"/>
    </ligand>
</feature>
<feature type="binding site" evidence="1">
    <location>
        <position position="274"/>
    </location>
    <ligand>
        <name>5-aminolevulinate</name>
        <dbReference type="ChEBI" id="CHEBI:356416"/>
        <label>2</label>
    </ligand>
</feature>
<feature type="binding site" evidence="1">
    <location>
        <position position="313"/>
    </location>
    <ligand>
        <name>5-aminolevulinate</name>
        <dbReference type="ChEBI" id="CHEBI:356416"/>
        <label>2</label>
    </ligand>
</feature>
<dbReference type="EC" id="4.2.1.24"/>
<dbReference type="EMBL" id="M57676">
    <property type="protein sequence ID" value="AAA22514.1"/>
    <property type="molecule type" value="Genomic_DNA"/>
</dbReference>
<dbReference type="EMBL" id="AL009126">
    <property type="protein sequence ID" value="CAB14773.1"/>
    <property type="molecule type" value="Genomic_DNA"/>
</dbReference>
<dbReference type="PIR" id="C42728">
    <property type="entry name" value="C42728"/>
</dbReference>
<dbReference type="RefSeq" id="NP_390691.1">
    <property type="nucleotide sequence ID" value="NC_000964.3"/>
</dbReference>
<dbReference type="RefSeq" id="WP_003229631.1">
    <property type="nucleotide sequence ID" value="NZ_OZ025638.1"/>
</dbReference>
<dbReference type="SMR" id="P30950"/>
<dbReference type="FunCoup" id="P30950">
    <property type="interactions" value="758"/>
</dbReference>
<dbReference type="STRING" id="224308.BSU28130"/>
<dbReference type="ChEMBL" id="CHEMBL3308970"/>
<dbReference type="jPOST" id="P30950"/>
<dbReference type="PaxDb" id="224308-BSU28130"/>
<dbReference type="EnsemblBacteria" id="CAB14773">
    <property type="protein sequence ID" value="CAB14773"/>
    <property type="gene ID" value="BSU_28130"/>
</dbReference>
<dbReference type="GeneID" id="936972"/>
<dbReference type="KEGG" id="bsu:BSU28130"/>
<dbReference type="PATRIC" id="fig|224308.179.peg.3056"/>
<dbReference type="eggNOG" id="COG0113">
    <property type="taxonomic scope" value="Bacteria"/>
</dbReference>
<dbReference type="InParanoid" id="P30950"/>
<dbReference type="OrthoDB" id="9805001at2"/>
<dbReference type="PhylomeDB" id="P30950"/>
<dbReference type="BioCyc" id="BSUB:BSU28130-MONOMER"/>
<dbReference type="UniPathway" id="UPA00251">
    <property type="reaction ID" value="UER00318"/>
</dbReference>
<dbReference type="Proteomes" id="UP000001570">
    <property type="component" value="Chromosome"/>
</dbReference>
<dbReference type="GO" id="GO:0005829">
    <property type="term" value="C:cytosol"/>
    <property type="evidence" value="ECO:0000318"/>
    <property type="project" value="GO_Central"/>
</dbReference>
<dbReference type="GO" id="GO:0004655">
    <property type="term" value="F:porphobilinogen synthase activity"/>
    <property type="evidence" value="ECO:0000318"/>
    <property type="project" value="GO_Central"/>
</dbReference>
<dbReference type="GO" id="GO:0008270">
    <property type="term" value="F:zinc ion binding"/>
    <property type="evidence" value="ECO:0000318"/>
    <property type="project" value="GO_Central"/>
</dbReference>
<dbReference type="GO" id="GO:0006783">
    <property type="term" value="P:heme biosynthetic process"/>
    <property type="evidence" value="ECO:0000318"/>
    <property type="project" value="GO_Central"/>
</dbReference>
<dbReference type="GO" id="GO:0006782">
    <property type="term" value="P:protoporphyrinogen IX biosynthetic process"/>
    <property type="evidence" value="ECO:0007669"/>
    <property type="project" value="UniProtKB-UniPathway"/>
</dbReference>
<dbReference type="CDD" id="cd00384">
    <property type="entry name" value="ALAD_PBGS"/>
    <property type="match status" value="1"/>
</dbReference>
<dbReference type="FunFam" id="3.20.20.70:FF:000019">
    <property type="entry name" value="Delta-aminolevulinic acid dehydratase"/>
    <property type="match status" value="1"/>
</dbReference>
<dbReference type="Gene3D" id="3.20.20.70">
    <property type="entry name" value="Aldolase class I"/>
    <property type="match status" value="1"/>
</dbReference>
<dbReference type="InterPro" id="IPR001731">
    <property type="entry name" value="ALAD"/>
</dbReference>
<dbReference type="InterPro" id="IPR030656">
    <property type="entry name" value="ALAD_AS"/>
</dbReference>
<dbReference type="InterPro" id="IPR013785">
    <property type="entry name" value="Aldolase_TIM"/>
</dbReference>
<dbReference type="NCBIfam" id="NF006762">
    <property type="entry name" value="PRK09283.1"/>
    <property type="match status" value="1"/>
</dbReference>
<dbReference type="PANTHER" id="PTHR11458">
    <property type="entry name" value="DELTA-AMINOLEVULINIC ACID DEHYDRATASE"/>
    <property type="match status" value="1"/>
</dbReference>
<dbReference type="PANTHER" id="PTHR11458:SF0">
    <property type="entry name" value="DELTA-AMINOLEVULINIC ACID DEHYDRATASE"/>
    <property type="match status" value="1"/>
</dbReference>
<dbReference type="Pfam" id="PF00490">
    <property type="entry name" value="ALAD"/>
    <property type="match status" value="1"/>
</dbReference>
<dbReference type="PIRSF" id="PIRSF001415">
    <property type="entry name" value="Porphbilin_synth"/>
    <property type="match status" value="1"/>
</dbReference>
<dbReference type="PRINTS" id="PR00144">
    <property type="entry name" value="DALDHYDRTASE"/>
</dbReference>
<dbReference type="SMART" id="SM01004">
    <property type="entry name" value="ALAD"/>
    <property type="match status" value="1"/>
</dbReference>
<dbReference type="SUPFAM" id="SSF51569">
    <property type="entry name" value="Aldolase"/>
    <property type="match status" value="1"/>
</dbReference>
<dbReference type="PROSITE" id="PS00169">
    <property type="entry name" value="D_ALA_DEHYDRATASE"/>
    <property type="match status" value="1"/>
</dbReference>
<protein>
    <recommendedName>
        <fullName>Delta-aminolevulinic acid dehydratase</fullName>
        <shortName>ALAD</shortName>
        <shortName>ALADH</shortName>
        <ecNumber>4.2.1.24</ecNumber>
    </recommendedName>
    <alternativeName>
        <fullName>Porphobilinogen synthase</fullName>
    </alternativeName>
</protein>
<accession>P30950</accession>
<reference key="1">
    <citation type="journal article" date="1991" name="J. Bacteriol.">
        <title>The Bacillus subtilis hemAXCDBL gene cluster, which encodes enzymes of the biosynthetic pathway from glutamate to uroporphyrinogen III.</title>
        <authorList>
            <person name="Hansson M."/>
            <person name="Rutberg L."/>
            <person name="Schroeder I."/>
            <person name="Hederstedt L."/>
        </authorList>
    </citation>
    <scope>NUCLEOTIDE SEQUENCE [GENOMIC DNA]</scope>
</reference>
<reference key="2">
    <citation type="journal article" date="1997" name="Nature">
        <title>The complete genome sequence of the Gram-positive bacterium Bacillus subtilis.</title>
        <authorList>
            <person name="Kunst F."/>
            <person name="Ogasawara N."/>
            <person name="Moszer I."/>
            <person name="Albertini A.M."/>
            <person name="Alloni G."/>
            <person name="Azevedo V."/>
            <person name="Bertero M.G."/>
            <person name="Bessieres P."/>
            <person name="Bolotin A."/>
            <person name="Borchert S."/>
            <person name="Borriss R."/>
            <person name="Boursier L."/>
            <person name="Brans A."/>
            <person name="Braun M."/>
            <person name="Brignell S.C."/>
            <person name="Bron S."/>
            <person name="Brouillet S."/>
            <person name="Bruschi C.V."/>
            <person name="Caldwell B."/>
            <person name="Capuano V."/>
            <person name="Carter N.M."/>
            <person name="Choi S.-K."/>
            <person name="Codani J.-J."/>
            <person name="Connerton I.F."/>
            <person name="Cummings N.J."/>
            <person name="Daniel R.A."/>
            <person name="Denizot F."/>
            <person name="Devine K.M."/>
            <person name="Duesterhoeft A."/>
            <person name="Ehrlich S.D."/>
            <person name="Emmerson P.T."/>
            <person name="Entian K.-D."/>
            <person name="Errington J."/>
            <person name="Fabret C."/>
            <person name="Ferrari E."/>
            <person name="Foulger D."/>
            <person name="Fritz C."/>
            <person name="Fujita M."/>
            <person name="Fujita Y."/>
            <person name="Fuma S."/>
            <person name="Galizzi A."/>
            <person name="Galleron N."/>
            <person name="Ghim S.-Y."/>
            <person name="Glaser P."/>
            <person name="Goffeau A."/>
            <person name="Golightly E.J."/>
            <person name="Grandi G."/>
            <person name="Guiseppi G."/>
            <person name="Guy B.J."/>
            <person name="Haga K."/>
            <person name="Haiech J."/>
            <person name="Harwood C.R."/>
            <person name="Henaut A."/>
            <person name="Hilbert H."/>
            <person name="Holsappel S."/>
            <person name="Hosono S."/>
            <person name="Hullo M.-F."/>
            <person name="Itaya M."/>
            <person name="Jones L.-M."/>
            <person name="Joris B."/>
            <person name="Karamata D."/>
            <person name="Kasahara Y."/>
            <person name="Klaerr-Blanchard M."/>
            <person name="Klein C."/>
            <person name="Kobayashi Y."/>
            <person name="Koetter P."/>
            <person name="Koningstein G."/>
            <person name="Krogh S."/>
            <person name="Kumano M."/>
            <person name="Kurita K."/>
            <person name="Lapidus A."/>
            <person name="Lardinois S."/>
            <person name="Lauber J."/>
            <person name="Lazarevic V."/>
            <person name="Lee S.-M."/>
            <person name="Levine A."/>
            <person name="Liu H."/>
            <person name="Masuda S."/>
            <person name="Mauel C."/>
            <person name="Medigue C."/>
            <person name="Medina N."/>
            <person name="Mellado R.P."/>
            <person name="Mizuno M."/>
            <person name="Moestl D."/>
            <person name="Nakai S."/>
            <person name="Noback M."/>
            <person name="Noone D."/>
            <person name="O'Reilly M."/>
            <person name="Ogawa K."/>
            <person name="Ogiwara A."/>
            <person name="Oudega B."/>
            <person name="Park S.-H."/>
            <person name="Parro V."/>
            <person name="Pohl T.M."/>
            <person name="Portetelle D."/>
            <person name="Porwollik S."/>
            <person name="Prescott A.M."/>
            <person name="Presecan E."/>
            <person name="Pujic P."/>
            <person name="Purnelle B."/>
            <person name="Rapoport G."/>
            <person name="Rey M."/>
            <person name="Reynolds S."/>
            <person name="Rieger M."/>
            <person name="Rivolta C."/>
            <person name="Rocha E."/>
            <person name="Roche B."/>
            <person name="Rose M."/>
            <person name="Sadaie Y."/>
            <person name="Sato T."/>
            <person name="Scanlan E."/>
            <person name="Schleich S."/>
            <person name="Schroeter R."/>
            <person name="Scoffone F."/>
            <person name="Sekiguchi J."/>
            <person name="Sekowska A."/>
            <person name="Seror S.J."/>
            <person name="Serror P."/>
            <person name="Shin B.-S."/>
            <person name="Soldo B."/>
            <person name="Sorokin A."/>
            <person name="Tacconi E."/>
            <person name="Takagi T."/>
            <person name="Takahashi H."/>
            <person name="Takemaru K."/>
            <person name="Takeuchi M."/>
            <person name="Tamakoshi A."/>
            <person name="Tanaka T."/>
            <person name="Terpstra P."/>
            <person name="Tognoni A."/>
            <person name="Tosato V."/>
            <person name="Uchiyama S."/>
            <person name="Vandenbol M."/>
            <person name="Vannier F."/>
            <person name="Vassarotti A."/>
            <person name="Viari A."/>
            <person name="Wambutt R."/>
            <person name="Wedler E."/>
            <person name="Wedler H."/>
            <person name="Weitzenegger T."/>
            <person name="Winters P."/>
            <person name="Wipat A."/>
            <person name="Yamamoto H."/>
            <person name="Yamane K."/>
            <person name="Yasumoto K."/>
            <person name="Yata K."/>
            <person name="Yoshida K."/>
            <person name="Yoshikawa H.-F."/>
            <person name="Zumstein E."/>
            <person name="Yoshikawa H."/>
            <person name="Danchin A."/>
        </authorList>
    </citation>
    <scope>NUCLEOTIDE SEQUENCE [LARGE SCALE GENOMIC DNA]</scope>
    <source>
        <strain>168</strain>
    </source>
</reference>
<keyword id="KW-0350">Heme biosynthesis</keyword>
<keyword id="KW-0456">Lyase</keyword>
<keyword id="KW-0460">Magnesium</keyword>
<keyword id="KW-0479">Metal-binding</keyword>
<keyword id="KW-0627">Porphyrin biosynthesis</keyword>
<keyword id="KW-1185">Reference proteome</keyword>
<keyword id="KW-0862">Zinc</keyword>
<sequence>MSQSFNRHRRLRTSKAMREMVKETRLHPSDFIYPIFVVEGLEGKKAVPSMPDVHHVSLDLLKDEVAELVKLGIQSVIVFGIPEEKDDCGTQAYHDHGIVQKAITEIKEHFPEMVVVADTCLCEYTDHGHCGLVKDGVILNDESLELLAQTAVSQAKAGADIIAPSNMMDGFVTVIREALDKEGFVNIPIMSYAVKYSSEFYGPFRDAANSTPQFGDRKTYQMDPANRMEALREAQSDVEEGADFLIVKPSLSYMDIMRDVKNEFTLPLVAYNVSGEYSMVKAAAQNGWIKEKEIVLEILTSMKRAGADLIITYHAKDAAKWLAE</sequence>
<comment type="function">
    <text evidence="1">Catalyzes an early step in the biosynthesis of tetrapyrroles. Binds two molecules of 5-aminolevulinate per subunit, each at a distinct site, and catalyzes their condensation to form porphobilinogen (By similarity).</text>
</comment>
<comment type="catalytic activity">
    <reaction>
        <text>2 5-aminolevulinate = porphobilinogen + 2 H2O + H(+)</text>
        <dbReference type="Rhea" id="RHEA:24064"/>
        <dbReference type="ChEBI" id="CHEBI:15377"/>
        <dbReference type="ChEBI" id="CHEBI:15378"/>
        <dbReference type="ChEBI" id="CHEBI:58126"/>
        <dbReference type="ChEBI" id="CHEBI:356416"/>
        <dbReference type="EC" id="4.2.1.24"/>
    </reaction>
</comment>
<comment type="cofactor">
    <cofactor evidence="1">
        <name>Zn(2+)</name>
        <dbReference type="ChEBI" id="CHEBI:29105"/>
    </cofactor>
    <text evidence="1">Binds 1 zinc ion per monomer.</text>
</comment>
<comment type="pathway">
    <text>Porphyrin-containing compound metabolism; protoporphyrin-IX biosynthesis; coproporphyrinogen-III from 5-aminolevulinate: step 1/4.</text>
</comment>
<comment type="subunit">
    <text evidence="1">Homooctamer.</text>
</comment>
<comment type="similarity">
    <text evidence="2">Belongs to the ALAD family.</text>
</comment>
<name>HEM2_BACSU</name>
<proteinExistence type="inferred from homology"/>
<organism>
    <name type="scientific">Bacillus subtilis (strain 168)</name>
    <dbReference type="NCBI Taxonomy" id="224308"/>
    <lineage>
        <taxon>Bacteria</taxon>
        <taxon>Bacillati</taxon>
        <taxon>Bacillota</taxon>
        <taxon>Bacilli</taxon>
        <taxon>Bacillales</taxon>
        <taxon>Bacillaceae</taxon>
        <taxon>Bacillus</taxon>
    </lineage>
</organism>